<reference key="1">
    <citation type="journal article" date="1997" name="Mamm. Genome">
        <title>The mouse homolog of PKD1: sequence analysis and alternative splicing.</title>
        <authorList>
            <person name="Lohning C."/>
            <person name="Nowicka U."/>
            <person name="Frischauf A.M."/>
        </authorList>
    </citation>
    <scope>NUCLEOTIDE SEQUENCE [MRNA]</scope>
</reference>
<reference key="2">
    <citation type="journal article" date="2009" name="PLoS Biol.">
        <title>Lineage-specific biology revealed by a finished genome assembly of the mouse.</title>
        <authorList>
            <person name="Church D.M."/>
            <person name="Goodstadt L."/>
            <person name="Hillier L.W."/>
            <person name="Zody M.C."/>
            <person name="Goldstein S."/>
            <person name="She X."/>
            <person name="Bult C.J."/>
            <person name="Agarwala R."/>
            <person name="Cherry J.L."/>
            <person name="DiCuccio M."/>
            <person name="Hlavina W."/>
            <person name="Kapustin Y."/>
            <person name="Meric P."/>
            <person name="Maglott D."/>
            <person name="Birtle Z."/>
            <person name="Marques A.C."/>
            <person name="Graves T."/>
            <person name="Zhou S."/>
            <person name="Teague B."/>
            <person name="Potamousis K."/>
            <person name="Churas C."/>
            <person name="Place M."/>
            <person name="Herschleb J."/>
            <person name="Runnheim R."/>
            <person name="Forrest D."/>
            <person name="Amos-Landgraf J."/>
            <person name="Schwartz D.C."/>
            <person name="Cheng Z."/>
            <person name="Lindblad-Toh K."/>
            <person name="Eichler E.E."/>
            <person name="Ponting C.P."/>
        </authorList>
    </citation>
    <scope>NUCLEOTIDE SEQUENCE [LARGE SCALE GENOMIC DNA]</scope>
    <source>
        <strain>C57BL/6J</strain>
    </source>
</reference>
<reference key="3">
    <citation type="journal article" date="2003" name="Nat. Genet.">
        <title>Polycystins 1 and 2 mediate mechanosensation in the primary cilium of kidney cells.</title>
        <authorList>
            <person name="Nauli S.M."/>
            <person name="Alenghat F.J."/>
            <person name="Luo Y."/>
            <person name="Williams E."/>
            <person name="Vassilev P."/>
            <person name="Li X."/>
            <person name="Elia A.E."/>
            <person name="Lu W."/>
            <person name="Brown E.M."/>
            <person name="Quinn S.J."/>
            <person name="Ingber D.E."/>
            <person name="Zhou J."/>
        </authorList>
    </citation>
    <scope>FUNCTION</scope>
    <scope>SUBCELLULAR LOCATION</scope>
</reference>
<reference key="4">
    <citation type="journal article" date="2005" name="J. Biol. Chem.">
        <title>Genomic organization and functional analysis of murine PKD2L1.</title>
        <authorList>
            <person name="Murakami M."/>
            <person name="Ohba T."/>
            <person name="Xu F."/>
            <person name="Shida S."/>
            <person name="Satoh E."/>
            <person name="Ono K."/>
            <person name="Miyoshi I."/>
            <person name="Watanabe H."/>
            <person name="Ito H."/>
            <person name="Iijima T."/>
        </authorList>
    </citation>
    <scope>INTERACTION WITH PKD2L1</scope>
</reference>
<reference key="5">
    <citation type="journal article" date="2007" name="Proc. Natl. Acad. Sci. U.S.A.">
        <title>Essential role of cleavage of Polycystin-1 at G protein-coupled receptor proteolytic site for kidney tubular structure.</title>
        <authorList>
            <person name="Yu S."/>
            <person name="Hackmann K."/>
            <person name="Gao J."/>
            <person name="He X."/>
            <person name="Piontek K."/>
            <person name="Garcia-Gonzalez M.A."/>
            <person name="Menezes L.F."/>
            <person name="Xu H."/>
            <person name="Germino G.G."/>
            <person name="Zuo J."/>
            <person name="Qian F."/>
        </authorList>
    </citation>
    <scope>DISRUPTION PHENOTYPE</scope>
    <scope>DIFFERENTIAL PATTERN OF AUTOCLEAVAGE</scope>
</reference>
<reference key="6">
    <citation type="journal article" date="2010" name="Curr. Biol.">
        <title>Identification of signaling pathways regulating primary cilium length and flow-mediated adaptation.</title>
        <authorList>
            <person name="Besschetnova T.Y."/>
            <person name="Kolpakova-Hart E."/>
            <person name="Guan Y."/>
            <person name="Zhou J."/>
            <person name="Olsen B.R."/>
            <person name="Shah J.V."/>
        </authorList>
    </citation>
    <scope>FUNCTION AS REGULATOR OF CILIUM LENGTH</scope>
</reference>
<reference key="7">
    <citation type="journal article" date="2010" name="PLoS ONE">
        <title>Nephrocystin-1 forms a complex with polycystin-1 via a polyproline motif/SH3 domain interaction and regulates the apoptotic response in mammals.</title>
        <authorList>
            <person name="Wodarczyk C."/>
            <person name="Distefano G."/>
            <person name="Rowe I."/>
            <person name="Gaetani M."/>
            <person name="Bricoli B."/>
            <person name="Muorah M."/>
            <person name="Spitaleri A."/>
            <person name="Mannella V."/>
            <person name="Ricchiuto P."/>
            <person name="Pema M."/>
            <person name="Castelli M."/>
            <person name="Casanova A.E."/>
            <person name="Mollica L."/>
            <person name="Banzi M."/>
            <person name="Boca M."/>
            <person name="Antignac C."/>
            <person name="Saunier S."/>
            <person name="Musco G."/>
            <person name="Boletta A."/>
        </authorList>
    </citation>
    <scope>INTERACTION WITH NPHP1</scope>
</reference>
<reference key="8">
    <citation type="journal article" date="2014" name="Hum. Mol. Genet.">
        <title>Bardet-Biedl syndrome proteins 1 and 3 regulate the ciliary trafficking of polycystic kidney disease 1 protein.</title>
        <authorList>
            <person name="Su X."/>
            <person name="Driscoll K."/>
            <person name="Yao G."/>
            <person name="Raed A."/>
            <person name="Wu M."/>
            <person name="Beales P.L."/>
            <person name="Zhou J."/>
        </authorList>
    </citation>
    <scope>FUNCTION</scope>
    <scope>SUBCELLULAR LOCATION</scope>
</reference>
<reference key="9">
    <citation type="journal article" date="2014" name="Nat. Commun.">
        <title>Ciliary membrane proteins traffic through the Golgi via a Rabep1/GGA1/Arl3-dependent mechanism.</title>
        <authorList>
            <person name="Kim H."/>
            <person name="Xu H."/>
            <person name="Yao Q."/>
            <person name="Li W."/>
            <person name="Huang Q."/>
            <person name="Outeda P."/>
            <person name="Cebotaru V."/>
            <person name="Chiaravalli M."/>
            <person name="Boletta A."/>
            <person name="Piontek K."/>
            <person name="Germino G.G."/>
            <person name="Weinman E.J."/>
            <person name="Watnick T."/>
            <person name="Qian F."/>
        </authorList>
    </citation>
    <scope>SUBCELLULAR LOCATION</scope>
    <scope>INTERACTION WITH PKD2 AND RABEP1</scope>
    <scope>AUTOCATALYTIC CLEAVAGE</scope>
</reference>
<reference key="10">
    <citation type="journal article" date="2016" name="Nat. Cell Biol.">
        <title>The polycystin complex mediates Wnt/Ca(2+) signalling.</title>
        <authorList>
            <person name="Kim S."/>
            <person name="Nie H."/>
            <person name="Nesin V."/>
            <person name="Tran U."/>
            <person name="Outeda P."/>
            <person name="Bai C.X."/>
            <person name="Keeling J."/>
            <person name="Maskey D."/>
            <person name="Watnick T."/>
            <person name="Wessely O."/>
            <person name="Tsiokas L."/>
        </authorList>
    </citation>
    <scope>INTERACTION WITH WNT5A; DVL1 AND DVL2</scope>
</reference>
<proteinExistence type="evidence at protein level"/>
<comment type="function">
    <text evidence="2 11 14 16">Component of a heteromeric calcium-permeable ion channel formed by PKD1 and PKD2 that is activated by interaction between PKD1 and a Wnt family member, such as WNT3A and WNT9B. Both PKD1 and PKD2 are required for channel activity (By similarity). Involved in renal tubulogenesis (PubMed:24939912). Involved in fluid-flow mechanosensation by the primary cilium in renal epithelium (PubMed:12514735). Acts as a regulator of cilium length, together with PKD2 (PubMed:20096584). The dynamic control of cilium length is essential in the regulation of mechanotransductive signaling. The cilium length response creates a negative feedback loop whereby fluid shear-mediated deflection of the primary cilium, which decreases intracellular cAMP, leads to cilium shortening and thus decreases flow-induced signaling. May be an ion-channel regulator. Involved in adhesive protein-protein and protein-carbohydrate interactions. Likely to be involved with polycystin-1-interacting protein 1 in the detection, sequestration and exocytosis of senescent mitochondria (By similarity).</text>
</comment>
<comment type="subunit">
    <text evidence="2 12 15 17 18">Component of the heterotetrameric polycystin channel complex with PKD2; the tetramer contains one PKD1 chain and three PKD2 chains (By similarity). Interacts with PKD2; the interaction is required for ciliary localization (PubMed:25405894). Interacts with PKD2L1 (PubMed:15548533). Interacts with PRKX; involved in differentiation and controlled morphogenesis of the kidney. Interacts (via extracellular domain) with WNT3A, WNT4 and WNT9B (By similarity). Interacts with WNT5A, DVL1 and DVL2 (PubMed:27214281). Interacts with NPHP1 (via SH3 domain) (PubMed:20856870). Interacts with BBS1, BBS4, BBS5 and TTC8. Interacts with RGS7 (By similarity). Interacts (via C-terminal domain) with RABEP1; the interaction connects PKD1:PKD2 to GGA1 and ARL3 that mediate the ciliary targeting (PubMed:25405894). Interacts (via the PKD repeats in the N-terminal extracellular region) with EPCIP; the interaction is not dependent on N-glycosylation of either protein (By similarity).</text>
</comment>
<comment type="interaction">
    <interactant intactId="EBI-6666305">
        <id>O08852</id>
    </interactant>
    <interactant intactId="EBI-9837017">
        <id>Q13563-1</id>
        <label>PKD2</label>
    </interactant>
    <organismsDiffer>true</organismsDiffer>
    <experiments>2</experiments>
</comment>
<comment type="subcellular location">
    <subcellularLocation>
        <location evidence="2">Cell membrane</location>
        <topology evidence="2">Multi-pass membrane protein</topology>
    </subcellularLocation>
    <subcellularLocation>
        <location evidence="11 16 17">Cell projection</location>
        <location evidence="11 16 17">Cilium</location>
    </subcellularLocation>
    <subcellularLocation>
        <location evidence="17">Endoplasmic reticulum</location>
    </subcellularLocation>
    <subcellularLocation>
        <location evidence="17">Golgi apparatus</location>
    </subcellularLocation>
    <subcellularLocation>
        <location evidence="2">Vesicle</location>
    </subcellularLocation>
    <subcellularLocation>
        <location evidence="2">Secreted</location>
        <location evidence="2">Extracellular exosome</location>
    </subcellularLocation>
    <text evidence="2 11 16 17">PKD1 localization to the plasma and ciliary membranes requires PKD2, is independent of PKD2 channel activity, and involves stimulation of PKD1 autocatalytic cleavage at the GPS region of the GAIN-B domain (PubMed:12514735, PubMed:25405894). PKD1:PKD2 interaction is required to reach the Golgi apparatus from endoplasmic reticulum and then traffic to the cilia (PubMed:25405894). Ciliary localization of PKD1 requires BBS1 and ARL6/BBS3 (PubMed:24939912). Cell surface localization requires GANAB (By similarity). Detected on migrasomes and on extracellular exosomes in urine (By similarity).</text>
</comment>
<comment type="domain">
    <text>The LDL-receptor class A domain is atypical; the potential calcium-binding site is missing.</text>
</comment>
<comment type="PTM">
    <text evidence="2">N-glycosylated.</text>
</comment>
<comment type="PTM">
    <text evidence="2 13 17">After synthesis, undergoes autoproteolytic cleavage between Leu-3040 and Thr-3041 in the GPS region of the GAIN-B domain (PubMed:25405894). Cleavage at the GPS region occurs through a cis-autoproteolytic mechanism involving an ester-intermediate via N-O acyl rearrangement (By similarity). This process takes place in the early secretory pathway, depends on initial N-glycosylation, and requires the REJ domain (By similarity). PKD1 is ubiquitously and incompletely cleaved in wild-type mice, so that uncleaved and cleaved PKD1 molecules coexist. The differential patterns of cleavage during embryonic development, as well as in adult mice, suggest different functions of uncleaved and cleaved molecules (PubMed:18003909).</text>
</comment>
<comment type="disruption phenotype">
    <text evidence="13">Knockin mice expressing non-cleavable PKD1 show a hypomorphic phenotype. They are viable, show rapid cystic dilation in renal collecting duct and distal convoluted tubule, but not in the proximal portion of the nephron, during the postnatal period, and die with severe uremia, mostly at 3 weeks of age. Additionally, they show dilation of the common bile duct and intrahepatic biliary ducts, but develop a normal pancreas within their life span.</text>
</comment>
<comment type="similarity">
    <text evidence="19">Belongs to the polycystin family.</text>
</comment>
<comment type="online information" name="Functional Glycomics Gateway - Glycan Binding">
    <link uri="http://www.functionalglycomics.org/glycomics/GBPServlet?&amp;operationType=view&amp;cbpId=cbp_mou_Ctlect_149"/>
    <text>Polycystin-1</text>
</comment>
<dbReference type="EMBL" id="U70209">
    <property type="protein sequence ID" value="AAC53207.1"/>
    <property type="molecule type" value="mRNA"/>
</dbReference>
<dbReference type="EMBL" id="AC132367">
    <property type="status" value="NOT_ANNOTATED_CDS"/>
    <property type="molecule type" value="Genomic_DNA"/>
</dbReference>
<dbReference type="CCDS" id="CCDS28485.1"/>
<dbReference type="RefSeq" id="NP_038658.2">
    <property type="nucleotide sequence ID" value="NM_013630.3"/>
</dbReference>
<dbReference type="SMR" id="O08852"/>
<dbReference type="BioGRID" id="202204">
    <property type="interactions" value="3"/>
</dbReference>
<dbReference type="ComplexPortal" id="CPX-4041">
    <property type="entry name" value="PKD1-PKD2 Polycystin complex"/>
</dbReference>
<dbReference type="DIP" id="DIP-44233N"/>
<dbReference type="FunCoup" id="O08852">
    <property type="interactions" value="472"/>
</dbReference>
<dbReference type="IntAct" id="O08852">
    <property type="interactions" value="8"/>
</dbReference>
<dbReference type="MINT" id="O08852"/>
<dbReference type="STRING" id="10090.ENSMUSP00000049296"/>
<dbReference type="MEROPS" id="P02.036"/>
<dbReference type="GlyCosmos" id="O08852">
    <property type="glycosylation" value="63 sites, No reported glycans"/>
</dbReference>
<dbReference type="GlyGen" id="O08852">
    <property type="glycosylation" value="66 sites, 4 N-linked glycans (12 sites)"/>
</dbReference>
<dbReference type="iPTMnet" id="O08852"/>
<dbReference type="PhosphoSitePlus" id="O08852"/>
<dbReference type="SwissPalm" id="O08852"/>
<dbReference type="PaxDb" id="10090-ENSMUSP00000049296"/>
<dbReference type="ProteomicsDB" id="289438"/>
<dbReference type="Pumba" id="O08852"/>
<dbReference type="Antibodypedia" id="23502">
    <property type="antibodies" value="197 antibodies from 30 providers"/>
</dbReference>
<dbReference type="DNASU" id="18763"/>
<dbReference type="Ensembl" id="ENSMUST00000035565.5">
    <property type="protein sequence ID" value="ENSMUSP00000049296.4"/>
    <property type="gene ID" value="ENSMUSG00000032855.7"/>
</dbReference>
<dbReference type="GeneID" id="18763"/>
<dbReference type="KEGG" id="mmu:18763"/>
<dbReference type="UCSC" id="uc008awv.1">
    <property type="organism name" value="mouse"/>
</dbReference>
<dbReference type="AGR" id="MGI:97603"/>
<dbReference type="CTD" id="5310"/>
<dbReference type="MGI" id="MGI:97603">
    <property type="gene designation" value="Pkd1"/>
</dbReference>
<dbReference type="VEuPathDB" id="HostDB:ENSMUSG00000032855"/>
<dbReference type="eggNOG" id="KOG3599">
    <property type="taxonomic scope" value="Eukaryota"/>
</dbReference>
<dbReference type="GeneTree" id="ENSGT00940000158702"/>
<dbReference type="HOGENOM" id="CLU_000173_0_0_1"/>
<dbReference type="InParanoid" id="O08852"/>
<dbReference type="OMA" id="GENHVSW"/>
<dbReference type="OrthoDB" id="6022660at2759"/>
<dbReference type="PhylomeDB" id="O08852"/>
<dbReference type="TreeFam" id="TF316484"/>
<dbReference type="Reactome" id="R-MMU-5620916">
    <property type="pathway name" value="VxPx cargo-targeting to cilium"/>
</dbReference>
<dbReference type="BioGRID-ORCS" id="18763">
    <property type="hits" value="2 hits in 78 CRISPR screens"/>
</dbReference>
<dbReference type="ChiTaRS" id="Pkd1">
    <property type="organism name" value="mouse"/>
</dbReference>
<dbReference type="PRO" id="PR:O08852"/>
<dbReference type="Proteomes" id="UP000000589">
    <property type="component" value="Chromosome 17"/>
</dbReference>
<dbReference type="RNAct" id="O08852">
    <property type="molecule type" value="protein"/>
</dbReference>
<dbReference type="Bgee" id="ENSMUSG00000032855">
    <property type="expression patterns" value="Expressed in cerebellar cortex and 139 other cell types or tissues"/>
</dbReference>
<dbReference type="ExpressionAtlas" id="O08852">
    <property type="expression patterns" value="baseline and differential"/>
</dbReference>
<dbReference type="GO" id="GO:0016323">
    <property type="term" value="C:basolateral plasma membrane"/>
    <property type="evidence" value="ECO:0007669"/>
    <property type="project" value="Ensembl"/>
</dbReference>
<dbReference type="GO" id="GO:0034704">
    <property type="term" value="C:calcium channel complex"/>
    <property type="evidence" value="ECO:0007669"/>
    <property type="project" value="Ensembl"/>
</dbReference>
<dbReference type="GO" id="GO:0034703">
    <property type="term" value="C:cation channel complex"/>
    <property type="evidence" value="ECO:0000250"/>
    <property type="project" value="UniProtKB"/>
</dbReference>
<dbReference type="GO" id="GO:0009986">
    <property type="term" value="C:cell surface"/>
    <property type="evidence" value="ECO:0000314"/>
    <property type="project" value="UniProtKB"/>
</dbReference>
<dbReference type="GO" id="GO:0005929">
    <property type="term" value="C:cilium"/>
    <property type="evidence" value="ECO:0000314"/>
    <property type="project" value="UniProtKB"/>
</dbReference>
<dbReference type="GO" id="GO:0005737">
    <property type="term" value="C:cytoplasm"/>
    <property type="evidence" value="ECO:0000315"/>
    <property type="project" value="BHF-UCL"/>
</dbReference>
<dbReference type="GO" id="GO:0005783">
    <property type="term" value="C:endoplasmic reticulum"/>
    <property type="evidence" value="ECO:0000314"/>
    <property type="project" value="UniProtKB"/>
</dbReference>
<dbReference type="GO" id="GO:0070062">
    <property type="term" value="C:extracellular exosome"/>
    <property type="evidence" value="ECO:0000250"/>
    <property type="project" value="UniProtKB"/>
</dbReference>
<dbReference type="GO" id="GO:0005794">
    <property type="term" value="C:Golgi apparatus"/>
    <property type="evidence" value="ECO:0000314"/>
    <property type="project" value="UniProtKB"/>
</dbReference>
<dbReference type="GO" id="GO:0016328">
    <property type="term" value="C:lateral plasma membrane"/>
    <property type="evidence" value="ECO:0007669"/>
    <property type="project" value="Ensembl"/>
</dbReference>
<dbReference type="GO" id="GO:0016020">
    <property type="term" value="C:membrane"/>
    <property type="evidence" value="ECO:0000266"/>
    <property type="project" value="ComplexPortal"/>
</dbReference>
<dbReference type="GO" id="GO:0140494">
    <property type="term" value="C:migrasome"/>
    <property type="evidence" value="ECO:0000250"/>
    <property type="project" value="UniProtKB"/>
</dbReference>
<dbReference type="GO" id="GO:0031514">
    <property type="term" value="C:motile cilium"/>
    <property type="evidence" value="ECO:0000314"/>
    <property type="project" value="MGI"/>
</dbReference>
<dbReference type="GO" id="GO:0005634">
    <property type="term" value="C:nucleus"/>
    <property type="evidence" value="ECO:0000314"/>
    <property type="project" value="MGI"/>
</dbReference>
<dbReference type="GO" id="GO:0005886">
    <property type="term" value="C:plasma membrane"/>
    <property type="evidence" value="ECO:0000353"/>
    <property type="project" value="MGI"/>
</dbReference>
<dbReference type="GO" id="GO:0002133">
    <property type="term" value="C:polycystin complex"/>
    <property type="evidence" value="ECO:0000314"/>
    <property type="project" value="UniProtKB"/>
</dbReference>
<dbReference type="GO" id="GO:0005262">
    <property type="term" value="F:calcium channel activity"/>
    <property type="evidence" value="ECO:0000315"/>
    <property type="project" value="BHF-UCL"/>
</dbReference>
<dbReference type="GO" id="GO:0030246">
    <property type="term" value="F:carbohydrate binding"/>
    <property type="evidence" value="ECO:0007669"/>
    <property type="project" value="UniProtKB-KW"/>
</dbReference>
<dbReference type="GO" id="GO:0005261">
    <property type="term" value="F:monoatomic cation channel activity"/>
    <property type="evidence" value="ECO:0000353"/>
    <property type="project" value="MGI"/>
</dbReference>
<dbReference type="GO" id="GO:0019904">
    <property type="term" value="F:protein domain specific binding"/>
    <property type="evidence" value="ECO:0007669"/>
    <property type="project" value="Ensembl"/>
</dbReference>
<dbReference type="GO" id="GO:0019901">
    <property type="term" value="F:protein kinase binding"/>
    <property type="evidence" value="ECO:0007669"/>
    <property type="project" value="Ensembl"/>
</dbReference>
<dbReference type="GO" id="GO:0140416">
    <property type="term" value="F:transcription regulator inhibitor activity"/>
    <property type="evidence" value="ECO:0000315"/>
    <property type="project" value="BHF-UCL"/>
</dbReference>
<dbReference type="GO" id="GO:0044325">
    <property type="term" value="F:transmembrane transporter binding"/>
    <property type="evidence" value="ECO:0007669"/>
    <property type="project" value="Ensembl"/>
</dbReference>
<dbReference type="GO" id="GO:0042813">
    <property type="term" value="F:Wnt receptor activity"/>
    <property type="evidence" value="ECO:0007669"/>
    <property type="project" value="Ensembl"/>
</dbReference>
<dbReference type="GO" id="GO:0001568">
    <property type="term" value="P:blood vessel development"/>
    <property type="evidence" value="ECO:0000315"/>
    <property type="project" value="MGI"/>
</dbReference>
<dbReference type="GO" id="GO:0060854">
    <property type="term" value="P:branching involved in lymph vessel morphogenesis"/>
    <property type="evidence" value="ECO:0000266"/>
    <property type="project" value="MGI"/>
</dbReference>
<dbReference type="GO" id="GO:0048754">
    <property type="term" value="P:branching morphogenesis of an epithelial tube"/>
    <property type="evidence" value="ECO:0000314"/>
    <property type="project" value="UniProtKB"/>
</dbReference>
<dbReference type="GO" id="GO:0070588">
    <property type="term" value="P:calcium ion transmembrane transport"/>
    <property type="evidence" value="ECO:0000315"/>
    <property type="project" value="BHF-UCL"/>
</dbReference>
<dbReference type="GO" id="GO:0006816">
    <property type="term" value="P:calcium ion transport"/>
    <property type="evidence" value="ECO:0000314"/>
    <property type="project" value="ComplexPortal"/>
</dbReference>
<dbReference type="GO" id="GO:0001502">
    <property type="term" value="P:cartilage condensation"/>
    <property type="evidence" value="ECO:0000315"/>
    <property type="project" value="MGI"/>
</dbReference>
<dbReference type="GO" id="GO:0007259">
    <property type="term" value="P:cell surface receptor signaling pathway via JAK-STAT"/>
    <property type="evidence" value="ECO:0000314"/>
    <property type="project" value="MGI"/>
</dbReference>
<dbReference type="GO" id="GO:0098609">
    <property type="term" value="P:cell-cell adhesion"/>
    <property type="evidence" value="ECO:0000315"/>
    <property type="project" value="MGI"/>
</dbReference>
<dbReference type="GO" id="GO:0050982">
    <property type="term" value="P:detection of mechanical stimulus"/>
    <property type="evidence" value="ECO:0000314"/>
    <property type="project" value="MGI"/>
</dbReference>
<dbReference type="GO" id="GO:0048565">
    <property type="term" value="P:digestive tract development"/>
    <property type="evidence" value="ECO:0007669"/>
    <property type="project" value="Ensembl"/>
</dbReference>
<dbReference type="GO" id="GO:0001892">
    <property type="term" value="P:embryonic placenta development"/>
    <property type="evidence" value="ECO:0000315"/>
    <property type="project" value="BHF-UCL"/>
</dbReference>
<dbReference type="GO" id="GO:0030010">
    <property type="term" value="P:establishment of cell polarity"/>
    <property type="evidence" value="ECO:0000315"/>
    <property type="project" value="MGI"/>
</dbReference>
<dbReference type="GO" id="GO:0048806">
    <property type="term" value="P:genitalia development"/>
    <property type="evidence" value="ECO:0007669"/>
    <property type="project" value="Ensembl"/>
</dbReference>
<dbReference type="GO" id="GO:0007507">
    <property type="term" value="P:heart development"/>
    <property type="evidence" value="ECO:0000315"/>
    <property type="project" value="MGI"/>
</dbReference>
<dbReference type="GO" id="GO:0001701">
    <property type="term" value="P:in utero embryonic development"/>
    <property type="evidence" value="ECO:0000315"/>
    <property type="project" value="MGI"/>
</dbReference>
<dbReference type="GO" id="GO:0001822">
    <property type="term" value="P:kidney development"/>
    <property type="evidence" value="ECO:0000315"/>
    <property type="project" value="BHF-UCL"/>
</dbReference>
<dbReference type="GO" id="GO:0001889">
    <property type="term" value="P:liver development"/>
    <property type="evidence" value="ECO:0000316"/>
    <property type="project" value="MGI"/>
</dbReference>
<dbReference type="GO" id="GO:0060428">
    <property type="term" value="P:lung epithelium development"/>
    <property type="evidence" value="ECO:0007669"/>
    <property type="project" value="Ensembl"/>
</dbReference>
<dbReference type="GO" id="GO:0036303">
    <property type="term" value="P:lymph vessel morphogenesis"/>
    <property type="evidence" value="ECO:0000315"/>
    <property type="project" value="MGI"/>
</dbReference>
<dbReference type="GO" id="GO:0072177">
    <property type="term" value="P:mesonephric duct development"/>
    <property type="evidence" value="ECO:0007669"/>
    <property type="project" value="Ensembl"/>
</dbReference>
<dbReference type="GO" id="GO:0072218">
    <property type="term" value="P:metanephric ascending thin limb development"/>
    <property type="evidence" value="ECO:0007669"/>
    <property type="project" value="Ensembl"/>
</dbReference>
<dbReference type="GO" id="GO:0072205">
    <property type="term" value="P:metanephric collecting duct development"/>
    <property type="evidence" value="ECO:0007669"/>
    <property type="project" value="Ensembl"/>
</dbReference>
<dbReference type="GO" id="GO:0072287">
    <property type="term" value="P:metanephric distal tubule morphogenesis"/>
    <property type="evidence" value="ECO:0007669"/>
    <property type="project" value="Ensembl"/>
</dbReference>
<dbReference type="GO" id="GO:0072237">
    <property type="term" value="P:metanephric proximal tubule development"/>
    <property type="evidence" value="ECO:0007669"/>
    <property type="project" value="Ensembl"/>
</dbReference>
<dbReference type="GO" id="GO:0160040">
    <property type="term" value="P:mitocytosis"/>
    <property type="evidence" value="ECO:0000250"/>
    <property type="project" value="UniProtKB"/>
</dbReference>
<dbReference type="GO" id="GO:0021915">
    <property type="term" value="P:neural tube development"/>
    <property type="evidence" value="ECO:0007669"/>
    <property type="project" value="Ensembl"/>
</dbReference>
<dbReference type="GO" id="GO:0071941">
    <property type="term" value="P:nitrogen cycle metabolic process"/>
    <property type="evidence" value="ECO:0000316"/>
    <property type="project" value="MGI"/>
</dbReference>
<dbReference type="GO" id="GO:0018105">
    <property type="term" value="P:peptidyl-serine phosphorylation"/>
    <property type="evidence" value="ECO:0000315"/>
    <property type="project" value="UniProtKB"/>
</dbReference>
<dbReference type="GO" id="GO:0060674">
    <property type="term" value="P:placenta blood vessel development"/>
    <property type="evidence" value="ECO:0000315"/>
    <property type="project" value="BHF-UCL"/>
</dbReference>
<dbReference type="GO" id="GO:0007204">
    <property type="term" value="P:positive regulation of cytosolic calcium ion concentration"/>
    <property type="evidence" value="ECO:0007669"/>
    <property type="project" value="Ensembl"/>
</dbReference>
<dbReference type="GO" id="GO:0045944">
    <property type="term" value="P:positive regulation of transcription by RNA polymerase II"/>
    <property type="evidence" value="ECO:0007669"/>
    <property type="project" value="Ensembl"/>
</dbReference>
<dbReference type="GO" id="GO:0006611">
    <property type="term" value="P:protein export from nucleus"/>
    <property type="evidence" value="ECO:0000315"/>
    <property type="project" value="UniProtKB"/>
</dbReference>
<dbReference type="GO" id="GO:0051290">
    <property type="term" value="P:protein heterotetramerization"/>
    <property type="evidence" value="ECO:0000250"/>
    <property type="project" value="UniProtKB"/>
</dbReference>
<dbReference type="GO" id="GO:0030155">
    <property type="term" value="P:regulation of cell adhesion"/>
    <property type="evidence" value="ECO:0000315"/>
    <property type="project" value="MGI"/>
</dbReference>
<dbReference type="GO" id="GO:0051726">
    <property type="term" value="P:regulation of cell cycle"/>
    <property type="evidence" value="ECO:0000314"/>
    <property type="project" value="MGI"/>
</dbReference>
<dbReference type="GO" id="GO:2000045">
    <property type="term" value="P:regulation of G1/S transition of mitotic cell cycle"/>
    <property type="evidence" value="ECO:0007669"/>
    <property type="project" value="Ensembl"/>
</dbReference>
<dbReference type="GO" id="GO:0060236">
    <property type="term" value="P:regulation of mitotic spindle organization"/>
    <property type="evidence" value="ECO:0000315"/>
    <property type="project" value="MGI"/>
</dbReference>
<dbReference type="GO" id="GO:0061136">
    <property type="term" value="P:regulation of proteasomal protein catabolic process"/>
    <property type="evidence" value="ECO:0000315"/>
    <property type="project" value="MGI"/>
</dbReference>
<dbReference type="GO" id="GO:0034405">
    <property type="term" value="P:response to fluid shear stress"/>
    <property type="evidence" value="ECO:0000315"/>
    <property type="project" value="MGI"/>
</dbReference>
<dbReference type="GO" id="GO:0043588">
    <property type="term" value="P:skin development"/>
    <property type="evidence" value="ECO:0007669"/>
    <property type="project" value="Ensembl"/>
</dbReference>
<dbReference type="GO" id="GO:0021510">
    <property type="term" value="P:spinal cord development"/>
    <property type="evidence" value="ECO:0007669"/>
    <property type="project" value="Ensembl"/>
</dbReference>
<dbReference type="GO" id="GO:0016055">
    <property type="term" value="P:Wnt signaling pathway"/>
    <property type="evidence" value="ECO:0000266"/>
    <property type="project" value="ComplexPortal"/>
</dbReference>
<dbReference type="CDD" id="cd00037">
    <property type="entry name" value="CLECT"/>
    <property type="match status" value="1"/>
</dbReference>
<dbReference type="CDD" id="cd00146">
    <property type="entry name" value="PKD"/>
    <property type="match status" value="11"/>
</dbReference>
<dbReference type="CDD" id="cd01752">
    <property type="entry name" value="PLAT_polycystin"/>
    <property type="match status" value="1"/>
</dbReference>
<dbReference type="FunFam" id="2.60.40.10:FF:003122">
    <property type="entry name" value="Pkd1"/>
    <property type="match status" value="1"/>
</dbReference>
<dbReference type="FunFam" id="2.60.40.10:FF:001786">
    <property type="entry name" value="PKD1 isoform 1"/>
    <property type="match status" value="1"/>
</dbReference>
<dbReference type="FunFam" id="3.10.100.10:FF:000086">
    <property type="entry name" value="PKD1 isoform 1"/>
    <property type="match status" value="1"/>
</dbReference>
<dbReference type="FunFam" id="2.60.40.10:FF:000825">
    <property type="entry name" value="Polycystin 1, transient receptor potential channel interacting"/>
    <property type="match status" value="3"/>
</dbReference>
<dbReference type="FunFam" id="2.60.40.10:FF:001724">
    <property type="entry name" value="Polycystin 1, transient receptor potential channel-interacting"/>
    <property type="match status" value="1"/>
</dbReference>
<dbReference type="FunFam" id="2.60.60.20:FF:000012">
    <property type="entry name" value="polycystin-1 isoform X2"/>
    <property type="match status" value="1"/>
</dbReference>
<dbReference type="FunFam" id="3.80.10.10:FF:000614">
    <property type="entry name" value="polycystin-1 isoform X2"/>
    <property type="match status" value="1"/>
</dbReference>
<dbReference type="Gene3D" id="2.60.40.10">
    <property type="entry name" value="Immunoglobulins"/>
    <property type="match status" value="9"/>
</dbReference>
<dbReference type="Gene3D" id="3.10.100.10">
    <property type="entry name" value="Mannose-Binding Protein A, subunit A"/>
    <property type="match status" value="1"/>
</dbReference>
<dbReference type="Gene3D" id="2.60.60.20">
    <property type="entry name" value="PLAT/LH2 domain"/>
    <property type="match status" value="1"/>
</dbReference>
<dbReference type="Gene3D" id="3.80.10.10">
    <property type="entry name" value="Ribonuclease Inhibitor"/>
    <property type="match status" value="2"/>
</dbReference>
<dbReference type="InterPro" id="IPR001304">
    <property type="entry name" value="C-type_lectin-like"/>
</dbReference>
<dbReference type="InterPro" id="IPR016186">
    <property type="entry name" value="C-type_lectin-like/link_sf"/>
</dbReference>
<dbReference type="InterPro" id="IPR016187">
    <property type="entry name" value="CTDL_fold"/>
</dbReference>
<dbReference type="InterPro" id="IPR000483">
    <property type="entry name" value="Cys-rich_flank_reg_C"/>
</dbReference>
<dbReference type="InterPro" id="IPR057244">
    <property type="entry name" value="GAIN_B"/>
</dbReference>
<dbReference type="InterPro" id="IPR000203">
    <property type="entry name" value="GPS"/>
</dbReference>
<dbReference type="InterPro" id="IPR013783">
    <property type="entry name" value="Ig-like_fold"/>
</dbReference>
<dbReference type="InterPro" id="IPR001611">
    <property type="entry name" value="Leu-rich_rpt"/>
</dbReference>
<dbReference type="InterPro" id="IPR003591">
    <property type="entry name" value="Leu-rich_rpt_typical-subtyp"/>
</dbReference>
<dbReference type="InterPro" id="IPR032675">
    <property type="entry name" value="LRR_dom_sf"/>
</dbReference>
<dbReference type="InterPro" id="IPR000372">
    <property type="entry name" value="LRRNT"/>
</dbReference>
<dbReference type="InterPro" id="IPR000434">
    <property type="entry name" value="PC1"/>
</dbReference>
<dbReference type="InterPro" id="IPR022409">
    <property type="entry name" value="PKD/Chitinase_dom"/>
</dbReference>
<dbReference type="InterPro" id="IPR002859">
    <property type="entry name" value="PKD/REJ-like"/>
</dbReference>
<dbReference type="InterPro" id="IPR013122">
    <property type="entry name" value="PKD1_2_channel"/>
</dbReference>
<dbReference type="InterPro" id="IPR000601">
    <property type="entry name" value="PKD_dom"/>
</dbReference>
<dbReference type="InterPro" id="IPR035986">
    <property type="entry name" value="PKD_dom_sf"/>
</dbReference>
<dbReference type="InterPro" id="IPR001024">
    <property type="entry name" value="PLAT/LH2_dom"/>
</dbReference>
<dbReference type="InterPro" id="IPR036392">
    <property type="entry name" value="PLAT/LH2_dom_sf"/>
</dbReference>
<dbReference type="InterPro" id="IPR042060">
    <property type="entry name" value="PLAT_polycystin1"/>
</dbReference>
<dbReference type="InterPro" id="IPR006228">
    <property type="entry name" value="Polycystin_cat"/>
</dbReference>
<dbReference type="InterPro" id="IPR046791">
    <property type="entry name" value="Polycystin_dom"/>
</dbReference>
<dbReference type="InterPro" id="IPR014010">
    <property type="entry name" value="REJ_dom"/>
</dbReference>
<dbReference type="InterPro" id="IPR002889">
    <property type="entry name" value="WSC_carb-bd"/>
</dbReference>
<dbReference type="NCBIfam" id="TIGR00864">
    <property type="entry name" value="PCC"/>
    <property type="match status" value="1"/>
</dbReference>
<dbReference type="PANTHER" id="PTHR46730">
    <property type="entry name" value="POLYCYSTIN-1"/>
    <property type="match status" value="1"/>
</dbReference>
<dbReference type="PANTHER" id="PTHR46730:SF3">
    <property type="entry name" value="POLYCYSTIN-1"/>
    <property type="match status" value="1"/>
</dbReference>
<dbReference type="Pfam" id="PF00059">
    <property type="entry name" value="Lectin_C"/>
    <property type="match status" value="1"/>
</dbReference>
<dbReference type="Pfam" id="PF13855">
    <property type="entry name" value="LRR_8"/>
    <property type="match status" value="1"/>
</dbReference>
<dbReference type="Pfam" id="PF00801">
    <property type="entry name" value="PKD"/>
    <property type="match status" value="15"/>
</dbReference>
<dbReference type="Pfam" id="PF08016">
    <property type="entry name" value="PKD_channel"/>
    <property type="match status" value="1"/>
</dbReference>
<dbReference type="Pfam" id="PF01477">
    <property type="entry name" value="PLAT"/>
    <property type="match status" value="1"/>
</dbReference>
<dbReference type="Pfam" id="PF20519">
    <property type="entry name" value="Polycystin_dom"/>
    <property type="match status" value="1"/>
</dbReference>
<dbReference type="Pfam" id="PF02010">
    <property type="entry name" value="REJ"/>
    <property type="match status" value="1"/>
</dbReference>
<dbReference type="Pfam" id="PF01822">
    <property type="entry name" value="WSC"/>
    <property type="match status" value="1"/>
</dbReference>
<dbReference type="PRINTS" id="PR00500">
    <property type="entry name" value="POLYCYSTIN1"/>
</dbReference>
<dbReference type="SMART" id="SM00034">
    <property type="entry name" value="CLECT"/>
    <property type="match status" value="1"/>
</dbReference>
<dbReference type="SMART" id="SM00303">
    <property type="entry name" value="GPS"/>
    <property type="match status" value="1"/>
</dbReference>
<dbReference type="SMART" id="SM00308">
    <property type="entry name" value="LH2"/>
    <property type="match status" value="1"/>
</dbReference>
<dbReference type="SMART" id="SM00369">
    <property type="entry name" value="LRR_TYP"/>
    <property type="match status" value="1"/>
</dbReference>
<dbReference type="SMART" id="SM00082">
    <property type="entry name" value="LRRCT"/>
    <property type="match status" value="1"/>
</dbReference>
<dbReference type="SMART" id="SM00013">
    <property type="entry name" value="LRRNT"/>
    <property type="match status" value="1"/>
</dbReference>
<dbReference type="SMART" id="SM00089">
    <property type="entry name" value="PKD"/>
    <property type="match status" value="15"/>
</dbReference>
<dbReference type="SMART" id="SM00321">
    <property type="entry name" value="WSC"/>
    <property type="match status" value="1"/>
</dbReference>
<dbReference type="SUPFAM" id="SSF56436">
    <property type="entry name" value="C-type lectin-like"/>
    <property type="match status" value="1"/>
</dbReference>
<dbReference type="SUPFAM" id="SSF52058">
    <property type="entry name" value="L domain-like"/>
    <property type="match status" value="1"/>
</dbReference>
<dbReference type="SUPFAM" id="SSF49723">
    <property type="entry name" value="Lipase/lipooxygenase domain (PLAT/LH2 domain)"/>
    <property type="match status" value="1"/>
</dbReference>
<dbReference type="SUPFAM" id="SSF49299">
    <property type="entry name" value="PKD domain"/>
    <property type="match status" value="13"/>
</dbReference>
<dbReference type="PROSITE" id="PS50041">
    <property type="entry name" value="C_TYPE_LECTIN_2"/>
    <property type="match status" value="1"/>
</dbReference>
<dbReference type="PROSITE" id="PS50221">
    <property type="entry name" value="GAIN_B"/>
    <property type="match status" value="1"/>
</dbReference>
<dbReference type="PROSITE" id="PS51450">
    <property type="entry name" value="LRR"/>
    <property type="match status" value="3"/>
</dbReference>
<dbReference type="PROSITE" id="PS50093">
    <property type="entry name" value="PKD"/>
    <property type="match status" value="12"/>
</dbReference>
<dbReference type="PROSITE" id="PS50095">
    <property type="entry name" value="PLAT"/>
    <property type="match status" value="1"/>
</dbReference>
<dbReference type="PROSITE" id="PS51111">
    <property type="entry name" value="REJ"/>
    <property type="match status" value="1"/>
</dbReference>
<dbReference type="PROSITE" id="PS51212">
    <property type="entry name" value="WSC"/>
    <property type="match status" value="1"/>
</dbReference>
<organism>
    <name type="scientific">Mus musculus</name>
    <name type="common">Mouse</name>
    <dbReference type="NCBI Taxonomy" id="10090"/>
    <lineage>
        <taxon>Eukaryota</taxon>
        <taxon>Metazoa</taxon>
        <taxon>Chordata</taxon>
        <taxon>Craniata</taxon>
        <taxon>Vertebrata</taxon>
        <taxon>Euteleostomi</taxon>
        <taxon>Mammalia</taxon>
        <taxon>Eutheria</taxon>
        <taxon>Euarchontoglires</taxon>
        <taxon>Glires</taxon>
        <taxon>Rodentia</taxon>
        <taxon>Myomorpha</taxon>
        <taxon>Muroidea</taxon>
        <taxon>Muridae</taxon>
        <taxon>Murinae</taxon>
        <taxon>Mus</taxon>
        <taxon>Mus</taxon>
    </lineage>
</organism>
<feature type="signal peptide" evidence="3">
    <location>
        <begin position="1"/>
        <end position="23"/>
    </location>
</feature>
<feature type="chain" id="PRO_0000354054" description="Polycystin-1">
    <location>
        <begin position="24"/>
        <end position="4293"/>
    </location>
</feature>
<feature type="topological domain" description="Extracellular" evidence="19">
    <location>
        <begin position="24"/>
        <end position="3066"/>
    </location>
</feature>
<feature type="transmembrane region" description="Helical" evidence="2">
    <location>
        <begin position="3067"/>
        <end position="3087"/>
    </location>
</feature>
<feature type="topological domain" description="Cytoplasmic" evidence="19">
    <location>
        <begin position="3088"/>
        <end position="3269"/>
    </location>
</feature>
<feature type="transmembrane region" description="Helical" evidence="2">
    <location>
        <begin position="3270"/>
        <end position="3290"/>
    </location>
</feature>
<feature type="topological domain" description="Extracellular" evidence="19">
    <location>
        <begin position="3291"/>
        <end position="3315"/>
    </location>
</feature>
<feature type="transmembrane region" description="Helical" evidence="2">
    <location>
        <begin position="3316"/>
        <end position="3336"/>
    </location>
</feature>
<feature type="topological domain" description="Cytoplasmic" evidence="19">
    <location>
        <begin position="3337"/>
        <end position="3549"/>
    </location>
</feature>
<feature type="transmembrane region" description="Helical" evidence="2">
    <location>
        <begin position="3550"/>
        <end position="3570"/>
    </location>
</feature>
<feature type="topological domain" description="Extracellular" evidence="19">
    <location>
        <begin position="3571"/>
        <end position="3572"/>
    </location>
</feature>
<feature type="transmembrane region" description="Helical" evidence="2">
    <location>
        <begin position="3573"/>
        <end position="3593"/>
    </location>
</feature>
<feature type="topological domain" description="Cytoplasmic" evidence="19">
    <location>
        <begin position="3594"/>
        <end position="3655"/>
    </location>
</feature>
<feature type="transmembrane region" description="Helical" evidence="2">
    <location>
        <begin position="3656"/>
        <end position="3676"/>
    </location>
</feature>
<feature type="topological domain" description="Extracellular" evidence="19">
    <location>
        <begin position="3677"/>
        <end position="3891"/>
    </location>
</feature>
<feature type="transmembrane region" description="Helical" evidence="2">
    <location>
        <begin position="3892"/>
        <end position="3912"/>
    </location>
</feature>
<feature type="topological domain" description="Cytoplasmic" evidence="19">
    <location>
        <begin position="3913"/>
        <end position="3925"/>
    </location>
</feature>
<feature type="transmembrane region" description="Helical" evidence="2">
    <location>
        <begin position="3926"/>
        <end position="3946"/>
    </location>
</feature>
<feature type="topological domain" description="Extracellular" evidence="19">
    <location>
        <begin position="3947"/>
        <end position="3974"/>
    </location>
</feature>
<feature type="transmembrane region" description="Helical" evidence="2">
    <location>
        <begin position="3975"/>
        <end position="3995"/>
    </location>
</feature>
<feature type="topological domain" description="Cytoplasmic" evidence="19">
    <location>
        <begin position="3996"/>
        <end position="4017"/>
    </location>
</feature>
<feature type="transmembrane region" description="Helical" evidence="2">
    <location>
        <begin position="4018"/>
        <end position="4038"/>
    </location>
</feature>
<feature type="topological domain" description="Extracellular" evidence="19">
    <location>
        <begin position="4039"/>
        <end position="4080"/>
    </location>
</feature>
<feature type="transmembrane region" description="Helical" evidence="2">
    <location>
        <begin position="4081"/>
        <end position="4100"/>
    </location>
</feature>
<feature type="topological domain" description="Cytoplasmic" evidence="19">
    <location>
        <begin position="4101"/>
        <end position="4293"/>
    </location>
</feature>
<feature type="domain" description="LRRNT">
    <location>
        <begin position="24"/>
        <end position="67"/>
    </location>
</feature>
<feature type="repeat" description="LRR 1">
    <location>
        <begin position="68"/>
        <end position="91"/>
    </location>
</feature>
<feature type="repeat" description="LRR 2">
    <location>
        <begin position="92"/>
        <end position="113"/>
    </location>
</feature>
<feature type="domain" description="LRRCT">
    <location>
        <begin position="125"/>
        <end position="178"/>
    </location>
</feature>
<feature type="domain" description="WSC" evidence="9">
    <location>
        <begin position="177"/>
        <end position="271"/>
    </location>
</feature>
<feature type="domain" description="PKD 1" evidence="6">
    <location>
        <begin position="272"/>
        <end position="359"/>
    </location>
</feature>
<feature type="domain" description="C-type lectin" evidence="4">
    <location>
        <begin position="415"/>
        <end position="530"/>
    </location>
</feature>
<feature type="domain" description="LDL-receptor class A; atypical">
    <location>
        <begin position="633"/>
        <end position="666"/>
    </location>
</feature>
<feature type="domain" description="PKD 2" evidence="6">
    <location>
        <begin position="849"/>
        <end position="922"/>
    </location>
</feature>
<feature type="domain" description="PKD 3" evidence="6">
    <location>
        <begin position="929"/>
        <end position="1014"/>
    </location>
</feature>
<feature type="domain" description="PKD 4" evidence="6">
    <location>
        <begin position="1017"/>
        <end position="1123"/>
    </location>
</feature>
<feature type="domain" description="PKD 5" evidence="6">
    <location>
        <begin position="1121"/>
        <end position="1209"/>
    </location>
</feature>
<feature type="domain" description="PKD 6" evidence="6">
    <location>
        <begin position="1207"/>
        <end position="1292"/>
    </location>
</feature>
<feature type="domain" description="PKD 7" evidence="6">
    <location>
        <begin position="1288"/>
        <end position="1377"/>
    </location>
</feature>
<feature type="domain" description="PKD 8" evidence="6">
    <location>
        <begin position="1376"/>
        <end position="1463"/>
    </location>
</feature>
<feature type="domain" description="PKD 9" evidence="6">
    <location>
        <begin position="1462"/>
        <end position="1545"/>
    </location>
</feature>
<feature type="domain" description="PKD 10" evidence="6">
    <location>
        <begin position="1544"/>
        <end position="1629"/>
    </location>
</feature>
<feature type="domain" description="PKD 11" evidence="6">
    <location>
        <begin position="1630"/>
        <end position="1718"/>
    </location>
</feature>
<feature type="domain" description="PKD 12" evidence="6">
    <location>
        <begin position="1716"/>
        <end position="1802"/>
    </location>
</feature>
<feature type="domain" description="PKD 13" evidence="6">
    <location>
        <begin position="1804"/>
        <end position="1886"/>
    </location>
</feature>
<feature type="domain" description="PKD 14" evidence="6">
    <location>
        <begin position="1885"/>
        <end position="1970"/>
    </location>
</feature>
<feature type="domain" description="PKD 15" evidence="6">
    <location>
        <begin position="1972"/>
        <end position="2053"/>
    </location>
</feature>
<feature type="domain" description="PKD 16" evidence="6">
    <location>
        <begin position="2056"/>
        <end position="2144"/>
    </location>
</feature>
<feature type="domain" description="REJ" evidence="8">
    <location>
        <begin position="2142"/>
        <end position="2828"/>
    </location>
</feature>
<feature type="domain" description="GAIN-B" evidence="5">
    <location>
        <begin position="2857"/>
        <end position="3055"/>
    </location>
</feature>
<feature type="domain" description="PLAT" evidence="7">
    <location>
        <begin position="3110"/>
        <end position="3225"/>
    </location>
</feature>
<feature type="region of interest" description="Disordered" evidence="10">
    <location>
        <begin position="613"/>
        <end position="632"/>
    </location>
</feature>
<feature type="region of interest" description="GPS" evidence="5">
    <location>
        <begin position="3007"/>
        <end position="3055"/>
    </location>
</feature>
<feature type="region of interest" description="Disordered" evidence="10">
    <location>
        <begin position="4150"/>
        <end position="4197"/>
    </location>
</feature>
<feature type="region of interest" description="Disordered" evidence="10">
    <location>
        <begin position="4235"/>
        <end position="4293"/>
    </location>
</feature>
<feature type="coiled-coil region" evidence="3">
    <location>
        <begin position="4210"/>
        <end position="4241"/>
    </location>
</feature>
<feature type="compositionally biased region" description="Low complexity" evidence="10">
    <location>
        <begin position="4153"/>
        <end position="4172"/>
    </location>
</feature>
<feature type="compositionally biased region" description="Polar residues" evidence="10">
    <location>
        <begin position="4173"/>
        <end position="4195"/>
    </location>
</feature>
<feature type="compositionally biased region" description="Low complexity" evidence="10">
    <location>
        <begin position="4238"/>
        <end position="4256"/>
    </location>
</feature>
<feature type="compositionally biased region" description="Polar residues" evidence="10">
    <location>
        <begin position="4265"/>
        <end position="4276"/>
    </location>
</feature>
<feature type="site" description="Cleavage; by autolysis" evidence="5">
    <location>
        <begin position="3040"/>
        <end position="3041"/>
    </location>
</feature>
<feature type="modified residue" description="Phosphoserine; by PRKX; in vitro" evidence="2">
    <location>
        <position position="4156"/>
    </location>
</feature>
<feature type="glycosylation site" description="N-linked (GlcNAc...) asparagine" evidence="3">
    <location>
        <position position="50"/>
    </location>
</feature>
<feature type="glycosylation site" description="N-linked (GlcNAc...) asparagine" evidence="3">
    <location>
        <position position="89"/>
    </location>
</feature>
<feature type="glycosylation site" description="N-linked (GlcNAc...) asparagine" evidence="3">
    <location>
        <position position="116"/>
    </location>
</feature>
<feature type="glycosylation site" description="N-linked (GlcNAc...) asparagine" evidence="3">
    <location>
        <position position="121"/>
    </location>
</feature>
<feature type="glycosylation site" description="N-linked (GlcNAc...) asparagine" evidence="3">
    <location>
        <position position="187"/>
    </location>
</feature>
<feature type="glycosylation site" description="N-linked (GlcNAc...) asparagine" evidence="3">
    <location>
        <position position="239"/>
    </location>
</feature>
<feature type="glycosylation site" description="N-linked (GlcNAc...) asparagine" evidence="3">
    <location>
        <position position="370"/>
    </location>
</feature>
<feature type="glycosylation site" description="N-linked (GlcNAc...) asparagine" evidence="3">
    <location>
        <position position="627"/>
    </location>
</feature>
<feature type="glycosylation site" description="N-linked (GlcNAc...) asparagine" evidence="3">
    <location>
        <position position="662"/>
    </location>
</feature>
<feature type="glycosylation site" description="N-linked (GlcNAc...) asparagine" evidence="3">
    <location>
        <position position="740"/>
    </location>
</feature>
<feature type="glycosylation site" description="N-linked (GlcNAc...) asparagine" evidence="3">
    <location>
        <position position="804"/>
    </location>
</feature>
<feature type="glycosylation site" description="N-linked (GlcNAc...) asparagine" evidence="3">
    <location>
        <position position="835"/>
    </location>
</feature>
<feature type="glycosylation site" description="N-linked (GlcNAc...) asparagine" evidence="3">
    <location>
        <position position="848"/>
    </location>
</feature>
<feature type="glycosylation site" description="N-linked (GlcNAc...) asparagine" evidence="3">
    <location>
        <position position="859"/>
    </location>
</feature>
<feature type="glycosylation site" description="N-linked (GlcNAc...) asparagine" evidence="3">
    <location>
        <position position="884"/>
    </location>
</feature>
<feature type="glycosylation site" description="N-linked (GlcNAc...) asparagine" evidence="3">
    <location>
        <position position="915"/>
    </location>
</feature>
<feature type="glycosylation site" description="N-linked (GlcNAc...) asparagine" evidence="3">
    <location>
        <position position="998"/>
    </location>
</feature>
<feature type="glycosylation site" description="N-linked (GlcNAc...) asparagine" evidence="3">
    <location>
        <position position="1004"/>
    </location>
</feature>
<feature type="glycosylation site" description="N-linked (GlcNAc...) asparagine" evidence="3">
    <location>
        <position position="1028"/>
    </location>
</feature>
<feature type="glycosylation site" description="N-linked (GlcNAc...) asparagine" evidence="3">
    <location>
        <position position="1084"/>
    </location>
</feature>
<feature type="glycosylation site" description="N-linked (GlcNAc...) asparagine" evidence="3">
    <location>
        <position position="1096"/>
    </location>
</feature>
<feature type="glycosylation site" description="N-linked (GlcNAc...) asparagine" evidence="3">
    <location>
        <position position="1107"/>
    </location>
</feature>
<feature type="glycosylation site" description="N-linked (GlcNAc...) asparagine" evidence="3">
    <location>
        <position position="1172"/>
    </location>
</feature>
<feature type="glycosylation site" description="N-linked (GlcNAc...) asparagine" evidence="3">
    <location>
        <position position="1188"/>
    </location>
</feature>
<feature type="glycosylation site" description="N-linked (GlcNAc...) asparagine" evidence="3">
    <location>
        <position position="1234"/>
    </location>
</feature>
<feature type="glycosylation site" description="N-linked (GlcNAc...) asparagine" evidence="3">
    <location>
        <position position="1263"/>
    </location>
</feature>
<feature type="glycosylation site" description="N-linked (GlcNAc...) asparagine" evidence="3">
    <location>
        <position position="1330"/>
    </location>
</feature>
<feature type="glycosylation site" description="N-linked (GlcNAc...) asparagine" evidence="3">
    <location>
        <position position="1342"/>
    </location>
</feature>
<feature type="glycosylation site" description="N-linked (GlcNAc...) asparagine" evidence="3">
    <location>
        <position position="1376"/>
    </location>
</feature>
<feature type="glycosylation site" description="N-linked (GlcNAc...) asparagine" evidence="3">
    <location>
        <position position="1444"/>
    </location>
</feature>
<feature type="glycosylation site" description="N-linked (GlcNAc...) asparagine" evidence="3">
    <location>
        <position position="1449"/>
    </location>
</feature>
<feature type="glycosylation site" description="N-linked (GlcNAc...) asparagine" evidence="3">
    <location>
        <position position="1468"/>
    </location>
</feature>
<feature type="glycosylation site" description="N-linked (GlcNAc...) asparagine" evidence="3">
    <location>
        <position position="1535"/>
    </location>
</feature>
<feature type="glycosylation site" description="N-linked (GlcNAc...) asparagine" evidence="3">
    <location>
        <position position="1548"/>
    </location>
</feature>
<feature type="glycosylation site" description="N-linked (GlcNAc...) asparagine" evidence="3">
    <location>
        <position position="1557"/>
    </location>
</feature>
<feature type="glycosylation site" description="N-linked (GlcNAc...) asparagine" evidence="3">
    <location>
        <position position="1643"/>
    </location>
</feature>
<feature type="glycosylation site" description="N-linked (GlcNAc...) asparagine" evidence="3">
    <location>
        <position position="1657"/>
    </location>
</feature>
<feature type="glycosylation site" description="N-linked (GlcNAc...) asparagine" evidence="3">
    <location>
        <position position="1706"/>
    </location>
</feature>
<feature type="glycosylation site" description="N-linked (GlcNAc...) asparagine" evidence="3">
    <location>
        <position position="1730"/>
    </location>
</feature>
<feature type="glycosylation site" description="N-linked (GlcNAc...) asparagine" evidence="3">
    <location>
        <position position="1788"/>
    </location>
</feature>
<feature type="glycosylation site" description="N-linked (GlcNAc...) asparagine" evidence="3">
    <location>
        <position position="1831"/>
    </location>
</feature>
<feature type="glycosylation site" description="N-linked (GlcNAc...) asparagine" evidence="3">
    <location>
        <position position="1863"/>
    </location>
</feature>
<feature type="glycosylation site" description="N-linked (GlcNAc...) asparagine" evidence="3">
    <location>
        <position position="1876"/>
    </location>
</feature>
<feature type="glycosylation site" description="N-linked (GlcNAc...) asparagine" evidence="3">
    <location>
        <position position="1987"/>
    </location>
</feature>
<feature type="glycosylation site" description="N-linked (GlcNAc...) asparagine" evidence="3">
    <location>
        <position position="2046"/>
    </location>
</feature>
<feature type="glycosylation site" description="N-linked (GlcNAc...) asparagine" evidence="3">
    <location>
        <position position="2070"/>
    </location>
</feature>
<feature type="glycosylation site" description="N-linked (GlcNAc...) asparagine" evidence="3">
    <location>
        <position position="2121"/>
    </location>
</feature>
<feature type="glycosylation site" description="N-linked (GlcNAc...) asparagine" evidence="3">
    <location>
        <position position="2244"/>
    </location>
</feature>
<feature type="glycosylation site" description="N-linked (GlcNAc...) asparagine" evidence="3">
    <location>
        <position position="2349"/>
    </location>
</feature>
<feature type="glycosylation site" description="N-linked (GlcNAc...) asparagine" evidence="3">
    <location>
        <position position="2391"/>
    </location>
</feature>
<feature type="glycosylation site" description="N-linked (GlcNAc...) asparagine" evidence="3">
    <location>
        <position position="2408"/>
    </location>
</feature>
<feature type="glycosylation site" description="N-linked (GlcNAc...) asparagine" evidence="3">
    <location>
        <position position="2414"/>
    </location>
</feature>
<feature type="glycosylation site" description="N-linked (GlcNAc...) asparagine" evidence="3">
    <location>
        <position position="2563"/>
    </location>
</feature>
<feature type="glycosylation site" description="N-linked (GlcNAc...) asparagine" evidence="3">
    <location>
        <position position="2640"/>
    </location>
</feature>
<feature type="glycosylation site" description="N-linked (GlcNAc...) asparagine" evidence="3">
    <location>
        <position position="2713"/>
    </location>
</feature>
<feature type="glycosylation site" description="N-linked (GlcNAc...) asparagine" evidence="3">
    <location>
        <position position="2749"/>
    </location>
</feature>
<feature type="glycosylation site" description="N-linked (GlcNAc...) asparagine" evidence="3">
    <location>
        <position position="2813"/>
    </location>
</feature>
<feature type="glycosylation site" description="N-linked (GlcNAc...) asparagine" evidence="3">
    <location>
        <position position="2836"/>
    </location>
</feature>
<feature type="glycosylation site" description="N-linked (GlcNAc...) asparagine" evidence="3">
    <location>
        <position position="2873"/>
    </location>
</feature>
<feature type="glycosylation site" description="N-linked (GlcNAc...) asparagine" evidence="3">
    <location>
        <position position="2948"/>
    </location>
</feature>
<feature type="glycosylation site" description="N-linked (GlcNAc...) asparagine" evidence="3">
    <location>
        <position position="2986"/>
    </location>
</feature>
<feature type="glycosylation site" description="N-linked (GlcNAc...) asparagine" evidence="3">
    <location>
        <position position="3728"/>
    </location>
</feature>
<feature type="glycosylation site" description="N-linked (GlcNAc...) asparagine" evidence="3">
    <location>
        <position position="3780"/>
    </location>
</feature>
<feature type="disulfide bond" evidence="1">
    <location>
        <begin position="436"/>
        <end position="529"/>
    </location>
</feature>
<feature type="disulfide bond" evidence="1">
    <location>
        <begin position="507"/>
        <end position="521"/>
    </location>
</feature>
<feature type="disulfide bond" evidence="1">
    <location>
        <begin position="635"/>
        <end position="648"/>
    </location>
</feature>
<feature type="disulfide bond" evidence="1">
    <location>
        <begin position="642"/>
        <end position="660"/>
    </location>
</feature>
<feature type="disulfide bond" evidence="5">
    <location>
        <begin position="3007"/>
        <end position="3035"/>
    </location>
</feature>
<feature type="sequence conflict" description="In Ref. 1; AAC53207." evidence="19" ref="1">
    <original>L</original>
    <variation>P</variation>
    <location>
        <position position="3"/>
    </location>
</feature>
<feature type="sequence conflict" description="In Ref. 1; AAC53207." evidence="19" ref="1">
    <original>R</original>
    <variation>Q</variation>
    <location>
        <position position="771"/>
    </location>
</feature>
<feature type="sequence conflict" description="In Ref. 1; AAC53207." evidence="19" ref="1">
    <original>E</original>
    <variation>D</variation>
    <location>
        <position position="871"/>
    </location>
</feature>
<feature type="sequence conflict" description="In Ref. 1; AAC53207." evidence="19" ref="1">
    <original>A</original>
    <variation>T</variation>
    <location>
        <position position="1180"/>
    </location>
</feature>
<feature type="sequence conflict" description="In Ref. 1; AAC53207." evidence="19" ref="1">
    <original>H</original>
    <variation>R</variation>
    <location>
        <position position="1292"/>
    </location>
</feature>
<feature type="sequence conflict" description="In Ref. 1; AAC53207." evidence="19" ref="1">
    <original>A</original>
    <variation>V</variation>
    <location>
        <position position="1632"/>
    </location>
</feature>
<feature type="sequence conflict" description="In Ref. 1; AAC53207." evidence="19" ref="1">
    <original>S</original>
    <variation>A</variation>
    <location>
        <position position="1684"/>
    </location>
</feature>
<feature type="sequence conflict" description="In Ref. 1; AAC53207." evidence="19" ref="1">
    <original>A</original>
    <variation>T</variation>
    <location>
        <position position="1770"/>
    </location>
</feature>
<feature type="sequence conflict" description="In Ref. 1; AAC53207." evidence="19" ref="1">
    <original>R</original>
    <variation>C</variation>
    <location>
        <position position="2085"/>
    </location>
</feature>
<feature type="sequence conflict" description="In Ref. 1; AAC53207." evidence="19" ref="1">
    <original>A</original>
    <variation>V</variation>
    <location>
        <position position="2507"/>
    </location>
</feature>
<feature type="sequence conflict" description="In Ref. 1; AAC53207." evidence="19" ref="1">
    <original>F</original>
    <variation>C</variation>
    <location>
        <position position="3956"/>
    </location>
</feature>
<feature type="sequence conflict" description="In Ref. 1; AAC53207." evidence="19" ref="1">
    <original>R</original>
    <variation>H</variation>
    <location>
        <position position="3962"/>
    </location>
</feature>
<feature type="sequence conflict" description="In Ref. 1; AAC53207." evidence="19" ref="1">
    <original>Q</original>
    <variation>R</variation>
    <location>
        <position position="4237"/>
    </location>
</feature>
<gene>
    <name evidence="20" type="primary">Pkd1</name>
</gene>
<protein>
    <recommendedName>
        <fullName evidence="19">Polycystin-1</fullName>
    </recommendedName>
    <alternativeName>
        <fullName>Autosomal dominant polycystic kidney disease 1 protein homolog</fullName>
    </alternativeName>
</protein>
<name>PKD1_MOUSE</name>
<keyword id="KW-0068">Autocatalytic cleavage</keyword>
<keyword id="KW-1003">Cell membrane</keyword>
<keyword id="KW-0966">Cell projection</keyword>
<keyword id="KW-0969">Cilium</keyword>
<keyword id="KW-0175">Coiled coil</keyword>
<keyword id="KW-1015">Disulfide bond</keyword>
<keyword id="KW-0256">Endoplasmic reticulum</keyword>
<keyword id="KW-0325">Glycoprotein</keyword>
<keyword id="KW-0333">Golgi apparatus</keyword>
<keyword id="KW-0430">Lectin</keyword>
<keyword id="KW-0433">Leucine-rich repeat</keyword>
<keyword id="KW-0472">Membrane</keyword>
<keyword id="KW-0597">Phosphoprotein</keyword>
<keyword id="KW-1185">Reference proteome</keyword>
<keyword id="KW-0677">Repeat</keyword>
<keyword id="KW-0964">Secreted</keyword>
<keyword id="KW-0732">Signal</keyword>
<keyword id="KW-0812">Transmembrane</keyword>
<keyword id="KW-1133">Transmembrane helix</keyword>
<keyword id="KW-0879">Wnt signaling pathway</keyword>
<accession>O08852</accession>
<accession>E9QJR6</accession>
<evidence type="ECO:0000250" key="1"/>
<evidence type="ECO:0000250" key="2">
    <source>
        <dbReference type="UniProtKB" id="P98161"/>
    </source>
</evidence>
<evidence type="ECO:0000255" key="3"/>
<evidence type="ECO:0000255" key="4">
    <source>
        <dbReference type="PROSITE-ProRule" id="PRU00040"/>
    </source>
</evidence>
<evidence type="ECO:0000255" key="5">
    <source>
        <dbReference type="PROSITE-ProRule" id="PRU00098"/>
    </source>
</evidence>
<evidence type="ECO:0000255" key="6">
    <source>
        <dbReference type="PROSITE-ProRule" id="PRU00151"/>
    </source>
</evidence>
<evidence type="ECO:0000255" key="7">
    <source>
        <dbReference type="PROSITE-ProRule" id="PRU00152"/>
    </source>
</evidence>
<evidence type="ECO:0000255" key="8">
    <source>
        <dbReference type="PROSITE-ProRule" id="PRU00511"/>
    </source>
</evidence>
<evidence type="ECO:0000255" key="9">
    <source>
        <dbReference type="PROSITE-ProRule" id="PRU00558"/>
    </source>
</evidence>
<evidence type="ECO:0000256" key="10">
    <source>
        <dbReference type="SAM" id="MobiDB-lite"/>
    </source>
</evidence>
<evidence type="ECO:0000269" key="11">
    <source>
    </source>
</evidence>
<evidence type="ECO:0000269" key="12">
    <source>
    </source>
</evidence>
<evidence type="ECO:0000269" key="13">
    <source>
    </source>
</evidence>
<evidence type="ECO:0000269" key="14">
    <source>
    </source>
</evidence>
<evidence type="ECO:0000269" key="15">
    <source>
    </source>
</evidence>
<evidence type="ECO:0000269" key="16">
    <source>
    </source>
</evidence>
<evidence type="ECO:0000269" key="17">
    <source>
    </source>
</evidence>
<evidence type="ECO:0000269" key="18">
    <source>
    </source>
</evidence>
<evidence type="ECO:0000305" key="19"/>
<evidence type="ECO:0000312" key="20">
    <source>
        <dbReference type="MGI" id="MGI:97603"/>
    </source>
</evidence>
<sequence length="4293" mass="466577">MPLGAPALLALALGLGLWLGALAGDPGRGCGPCPLPCFCGPAPDAACRVNCSGRWLQTLGPSLRIPADATALDLSHNLLQTLDIGLLVNLSALVELDLSNNRISTLEEGVFANLFNLSEINLSGNPFECNCGLAWLPRWAKEHQVHVVQSEATTCRGPIPLAGQPLLSIPLLDNACGEEYVACLPDNSSGAVAAVPFYFAHEGPLETEACSAFCFSAGEGLAALSEQNQCLCGAGQASNSSAACSSWCSSISLSLNSACGGPTLLQHTFPASPGATLVGPHGPLASGQPADFHITSSLPISSTRWNFGDGSPEVDMASPAATHFYVLPGSYHMTVVLALGAGSALLETEVQVEATPTVLELVCPSFVHSNESLELGIRHRGGSALEVTYSILALDKEPAQVVHPLCPLDTEIFPGNGHCYRLVAEKAPWLQAQEQCRTWAGAALAMVDSPAIQHFLVSKVTRSLDVWIGFSSVEGTEGLDPRGEAFSLESCQNWLPGEPHPATAEHCVRLGPAGQCNTDLCSAPHSYVCELRPGGPVWDTENFVMGMSGGGLSGPLHPLAQQETVQGPLRPVEVMVFPGLSPSREAFLTAAEFSTQKLEEPAQMRLQVYRPSGGAAAVPEGSSEPDNRTEPAPKCVPEELWCPGANVCIPFDASCNSHVCINGSVSRLGLSRASYTLWKEFFFSVPAGPPTQYLVTLHSQDVPMLPGDLIGLQHDAGPGTLLQCPLASSCPGQALYLSTNASDWMTNLPVHLEEAWAGPVCSLQLLLVTERLTPLLGLGPNPGLQHPGHYEVRATVGNSVSRQNLSCSFSVVSPIAGLRVIHPIPLDGHIYVPTNGSVLVLQVDSGANATATAQWFGGNISAPFEDACPPEVDFLKQDCTEEANGTLFSVLMLPRLKEGDHTVEIVAQNGASQANLSLRVTAEEPICGLRAVPSPEARVLQGILVRYSPMVEAGSDVAFRWTIDDKQSLTFHNTVFNVIYQSAAIFKLSLTASNHVSNITVNYNVTVERMNKMHGLWVSAVPTVLPPNATLALTGGVLVDSAVEVAFLWNFGDGEQVLRQFKPPYDESFQVPDPTVAQVLVEHNTTHIYTTPGEYNLTVLVSNTYENLTQQVTVSVRTVLPNVAIGMSSNVLVAGQPITFSPYPLPSTDGVLYTWDFGDGSPVLIQSQPVLNHTYSMTGAYRITLEVNNTVSSVTAHADIRVFQELHGLTVYLSPSVEQGAPMVVSASVESGDNITWTFDMGDGTVFTGPEATVQHVYLRAQNFTVTVEAANPAGHLSQSLHVQVFVLEVLHIEPSTCIPTQPSAQLMAHVTGDPVHYLFDWTFGDGSSNVTVHGHPSVTHNFTRSGIFPLALVLSSHVNKAHYFTSICVEPEIRNITLQPERQFVKLGDEARLVAYSWPPFPYRYTWDFGTEDTTHTQTGGSEVKFIYREPGSYLVIVTVSNNISSTNDSAFVEVQEPVLVTGIRINGSHVLELQQPYLLSAMGSGSPATYLWELGDGSQSEGPEVTHIYSSTGDFTVRVSGWNEVSRSEAQLNITVKQRVRGLTINASRTVVPLNGSVSFSTLLEVGSDVHYSWVLCDRCTPIPGGPTISYTFRSVGTFNIIVTAENEVGSAQDSIFIYVLQFIEGLQVAGGDNGCCFPTNYTLQLQAAVRDGTNISYSWTAQQEGSLITLFGSGKCFSLTSLKASTYYVHLRATNMLGSAAANRTIDFVEPVESLILSASPNPAAVNMSLTLCAELAGGSGVVYTWYLEEGLSWKTSMPSTTHTFAAPGLHLVRVTAENQLGSVNATVEVAIQVPVGGLSIRTSEPDSIFVAAGSTLPFWGQLAEGTNVTWCWTLPGGSKDSQYIAVRFSTAGSFSLQLNASNAVSWVSAMYNLTVEEPIVNLMLWASSKVVAPGQPVHFEILLAAGSALTFRLQVGGSVPEVLPSPHFSHSFFRVGDHLVNVQAENHVSHAQAQVRILVLEAVVGLQVPNCCEPGMATGTEKNFTARVQRGSRVAYAWYFSLQKVQGDSLVILSGRDVTYTPVAAGLLEIHVRAFNELGGVNLTLMVEVQDIIQYVTLQSGRCFTNRSARFEAATSPSPRRVTYHWDFGDGTPVQKTEEFWADHYYLRPGDYHVEVNATNLVSFFVAQATVTVQVLACREPEVEVALPLQVLMRRSQRNYLEAHVDLRNCVSYQTEYRWEIYRTASCQRPGRMAQMVLPGVDVSRPQLVVPRLALPVGHYCFVFVVSFGDTPLARSIQANVTVAAERLVPIIEGGSYRVWSDTQDLVLDGSKSYDPNLEDGDQTPLNFHWACVASTQSETGGCVLNFGPRGSSVVTIPLERLEAGVEYTFNLIVWKAGRKEEATNQTVLIRSGRVPIVSLECVSCKAQAVYEVSRSSYVYLEGHCHNCSRGYKQGCWAARTFSNKTLVLNETTTSTGSTGMNLVVRPGALRDGEGYIFTLTVLGHSGEEEGCASIRLSPNRPPLGGSCRLFPLDSVRGLTTKVHFECTGWRDAEDGGAPLVYALLLKRCRQSYCENFCIYKGSLSTYGAVLPPGFQPLFVVSLAVVVQDQLGAAVVALNRSLTIVLPEPSGNPADLVPWLHSLTASVLPGLLKQADPQHVIEYSLALITVLNEYEQAPDVSEPNVEQQLRAQMRKNITETLISLRVNTVDDIQQITAALAQCMVSSRELMCRSCLKKMLQKLEGMMRILQAETTEGTLTPTTIADSILNITGDLIHLASLDMQGPQPLELGVEPPSLMVASKAYNLSSALMRILMRSRVLNEEPLTLAGEEIVALGKRSDPLSLLCYGKALGPSCHFSIPEAFSGALSNLSDVVQLIFLVDSNPFPFGYISNYTVSTKVASMAFQTQTGTQIPIEQLAAERAITVKVPNNSDQAAQSSHNPVGSTIVQPQTSVSAVVTADNSNPQAGLHLRITYTVLNERYLSAEPEPYLAVYLHSVSQPNEYNCSASRRISLEVLEGADHRLYTFFIAPGTGTLDRSYYLNLTSHFHWSALEVSVGLYTSLCQYFSEEMMMWRTEGIVPLEETSPSQAVCLTRHLTAFGASLFVPPSHVQFIFPEPSASINYIVLLTCVICLVTYVVMAMILRKLDQLDVSRVRVIPFCGKGGRFKYEILVKTGWSRGSGTTAHVGIMLYGEDNRSGHRHLDGDRAFHRNSLDIFQIATPHSLGSVWKIRVWHDNKGLSPAWFLQHIIVRDLQSARSTFFLVNDWLSVETEANGGLVEKEVLAANEAALWQFQRLLVAELQRGFFDKHIWLSIWDRPPRSRFTRVQRVTCCVLLLCLFLAANAVWYGVVRDTTYSMGPVSSLISPGVDTVAIGLVSSVVVYPVYLAVLFLFRMSRSKVSGDQNPTPTGQQALDVDSYLDPSVLDSSLLTLSGLTEAFAGQVKNDLFLEDAKSLVCWPSSEGTLSWPDLLSDPSVVSSTLQRLTQGRPGCMLGSEEDGASLVSPSLPAKYLSASDEDLIHQVLADGANNLVPTQDTLLETDLLTSLSSVPGEKTETLILQTVGEERPASMGLSWEQSPVTRLSRTGLVEGFQKRLLPAWCAPLAHGLSLLLVAVAVAVSGWIGASFPPSVSVMWLLSSSSSFLASFLGWEPLKVLLEALYFSLVAKRLHPDEDDTLVESPAVTPVSERVPRVRPPHGFALFLAKEEARKVKRLHDMLKRLLVYMLFLLVTLLANYGDASCHGHAYRLQSAIKQELDSQAFLAITRSDEFWPWMSHVFLPYVHGNQSSPELGPPRLRQVRLQEAFCPDPSSSEHMCSAAGSLSTSDYGIGWQSVVQNGSETWAYSAPDLLGAWYWGYCAVYDSGGYIQELGLSLEESRARLGFLQLHNWLDSRSRAVFVELTRYSPAVGLHAAVTLRLEFPVAGHALAAFSVRPFALRRLSTGLSLPLLTSVCLLLFALYFSMAEVQTWRKDGCACTARPDTWARCLLVILTAATGLVRLAQLGIADRQWTHFVQDHPRHFTSFDQVAQLGSVARGLAASLLFLLLVKAAQQLRFVRQWSVFGKTLCRALPELMGATLGLVLLGVAYAQMAILLISSGADTLYNMARAFLVLCPGARVPTLCPSESWYLSPLLCVGLWALRVWGALRLGAILLRWRYHALRGELYRPAWEPQDYEMVELFLRRLRLWMGFSKVKEFRHKVRFEGMDPLPSRSSRGSKSSPVVLPPSSGSEASHPSTSSSQPDGPSASLSRSTLKLEPEPSRLHAVFESLLVQFDRLNQATEDVYQLEQQLQSLQGHGHNGPPSSPSPGCFPGSQPALPSRLSRASQGLDQTVGPNRVSLWPNNKVHPSST</sequence>